<accession>P39157</accession>
<evidence type="ECO:0000305" key="1"/>
<sequence>MNELKQTWKTMLSEFQDQAELKQDQLFVLGCSTSEVAGSRIGTSGSVDIAESIYSGLAELREKTGIHLAFQCCEHLNRALVVEAETAKLFRLPTVSAVPVPKAGGAMASYAFKQMKSPVLVETIQADAGIDIGDTFIGMHLKPVAVPVRVSQNSLGSAHVTLARTRPKLIGGVRAVYECE</sequence>
<name>YWLG_BACSU</name>
<feature type="chain" id="PRO_0000213005" description="UPF0340 protein YwlG">
    <location>
        <begin position="1"/>
        <end position="180"/>
    </location>
</feature>
<organism>
    <name type="scientific">Bacillus subtilis (strain 168)</name>
    <dbReference type="NCBI Taxonomy" id="224308"/>
    <lineage>
        <taxon>Bacteria</taxon>
        <taxon>Bacillati</taxon>
        <taxon>Bacillota</taxon>
        <taxon>Bacilli</taxon>
        <taxon>Bacillales</taxon>
        <taxon>Bacillaceae</taxon>
        <taxon>Bacillus</taxon>
    </lineage>
</organism>
<proteinExistence type="evidence at transcript level"/>
<gene>
    <name type="primary">ywlG</name>
    <name type="ordered locus">BSU36910</name>
    <name type="ORF">ipc-33d</name>
</gene>
<protein>
    <recommendedName>
        <fullName>UPF0340 protein YwlG</fullName>
    </recommendedName>
</protein>
<reference key="1">
    <citation type="submission" date="1994-10" db="EMBL/GenBank/DDBJ databases">
        <authorList>
            <person name="Glaser P."/>
            <person name="Danchin A."/>
        </authorList>
    </citation>
    <scope>NUCLEOTIDE SEQUENCE [GENOMIC DNA]</scope>
    <source>
        <strain>168</strain>
    </source>
</reference>
<reference key="2">
    <citation type="journal article" date="1997" name="Nature">
        <title>The complete genome sequence of the Gram-positive bacterium Bacillus subtilis.</title>
        <authorList>
            <person name="Kunst F."/>
            <person name="Ogasawara N."/>
            <person name="Moszer I."/>
            <person name="Albertini A.M."/>
            <person name="Alloni G."/>
            <person name="Azevedo V."/>
            <person name="Bertero M.G."/>
            <person name="Bessieres P."/>
            <person name="Bolotin A."/>
            <person name="Borchert S."/>
            <person name="Borriss R."/>
            <person name="Boursier L."/>
            <person name="Brans A."/>
            <person name="Braun M."/>
            <person name="Brignell S.C."/>
            <person name="Bron S."/>
            <person name="Brouillet S."/>
            <person name="Bruschi C.V."/>
            <person name="Caldwell B."/>
            <person name="Capuano V."/>
            <person name="Carter N.M."/>
            <person name="Choi S.-K."/>
            <person name="Codani J.-J."/>
            <person name="Connerton I.F."/>
            <person name="Cummings N.J."/>
            <person name="Daniel R.A."/>
            <person name="Denizot F."/>
            <person name="Devine K.M."/>
            <person name="Duesterhoeft A."/>
            <person name="Ehrlich S.D."/>
            <person name="Emmerson P.T."/>
            <person name="Entian K.-D."/>
            <person name="Errington J."/>
            <person name="Fabret C."/>
            <person name="Ferrari E."/>
            <person name="Foulger D."/>
            <person name="Fritz C."/>
            <person name="Fujita M."/>
            <person name="Fujita Y."/>
            <person name="Fuma S."/>
            <person name="Galizzi A."/>
            <person name="Galleron N."/>
            <person name="Ghim S.-Y."/>
            <person name="Glaser P."/>
            <person name="Goffeau A."/>
            <person name="Golightly E.J."/>
            <person name="Grandi G."/>
            <person name="Guiseppi G."/>
            <person name="Guy B.J."/>
            <person name="Haga K."/>
            <person name="Haiech J."/>
            <person name="Harwood C.R."/>
            <person name="Henaut A."/>
            <person name="Hilbert H."/>
            <person name="Holsappel S."/>
            <person name="Hosono S."/>
            <person name="Hullo M.-F."/>
            <person name="Itaya M."/>
            <person name="Jones L.-M."/>
            <person name="Joris B."/>
            <person name="Karamata D."/>
            <person name="Kasahara Y."/>
            <person name="Klaerr-Blanchard M."/>
            <person name="Klein C."/>
            <person name="Kobayashi Y."/>
            <person name="Koetter P."/>
            <person name="Koningstein G."/>
            <person name="Krogh S."/>
            <person name="Kumano M."/>
            <person name="Kurita K."/>
            <person name="Lapidus A."/>
            <person name="Lardinois S."/>
            <person name="Lauber J."/>
            <person name="Lazarevic V."/>
            <person name="Lee S.-M."/>
            <person name="Levine A."/>
            <person name="Liu H."/>
            <person name="Masuda S."/>
            <person name="Mauel C."/>
            <person name="Medigue C."/>
            <person name="Medina N."/>
            <person name="Mellado R.P."/>
            <person name="Mizuno M."/>
            <person name="Moestl D."/>
            <person name="Nakai S."/>
            <person name="Noback M."/>
            <person name="Noone D."/>
            <person name="O'Reilly M."/>
            <person name="Ogawa K."/>
            <person name="Ogiwara A."/>
            <person name="Oudega B."/>
            <person name="Park S.-H."/>
            <person name="Parro V."/>
            <person name="Pohl T.M."/>
            <person name="Portetelle D."/>
            <person name="Porwollik S."/>
            <person name="Prescott A.M."/>
            <person name="Presecan E."/>
            <person name="Pujic P."/>
            <person name="Purnelle B."/>
            <person name="Rapoport G."/>
            <person name="Rey M."/>
            <person name="Reynolds S."/>
            <person name="Rieger M."/>
            <person name="Rivolta C."/>
            <person name="Rocha E."/>
            <person name="Roche B."/>
            <person name="Rose M."/>
            <person name="Sadaie Y."/>
            <person name="Sato T."/>
            <person name="Scanlan E."/>
            <person name="Schleich S."/>
            <person name="Schroeter R."/>
            <person name="Scoffone F."/>
            <person name="Sekiguchi J."/>
            <person name="Sekowska A."/>
            <person name="Seror S.J."/>
            <person name="Serror P."/>
            <person name="Shin B.-S."/>
            <person name="Soldo B."/>
            <person name="Sorokin A."/>
            <person name="Tacconi E."/>
            <person name="Takagi T."/>
            <person name="Takahashi H."/>
            <person name="Takemaru K."/>
            <person name="Takeuchi M."/>
            <person name="Tamakoshi A."/>
            <person name="Tanaka T."/>
            <person name="Terpstra P."/>
            <person name="Tognoni A."/>
            <person name="Tosato V."/>
            <person name="Uchiyama S."/>
            <person name="Vandenbol M."/>
            <person name="Vannier F."/>
            <person name="Vassarotti A."/>
            <person name="Viari A."/>
            <person name="Wambutt R."/>
            <person name="Wedler E."/>
            <person name="Wedler H."/>
            <person name="Weitzenegger T."/>
            <person name="Winters P."/>
            <person name="Wipat A."/>
            <person name="Yamamoto H."/>
            <person name="Yamane K."/>
            <person name="Yasumoto K."/>
            <person name="Yata K."/>
            <person name="Yoshida K."/>
            <person name="Yoshikawa H.-F."/>
            <person name="Zumstein E."/>
            <person name="Yoshikawa H."/>
            <person name="Danchin A."/>
        </authorList>
    </citation>
    <scope>NUCLEOTIDE SEQUENCE [LARGE SCALE GENOMIC DNA]</scope>
    <source>
        <strain>168</strain>
    </source>
</reference>
<reference key="3">
    <citation type="journal article" date="2003" name="Mol. Microbiol.">
        <title>Identification of additional TnrA-regulated genes of Bacillus subtilis associated with a TnrA box.</title>
        <authorList>
            <person name="Yoshida K."/>
            <person name="Yamaguchi H."/>
            <person name="Kinehara M."/>
            <person name="Ohki Y.-H."/>
            <person name="Nakaura Y."/>
            <person name="Fujita Y."/>
        </authorList>
    </citation>
    <scope>REGULATION BY TNRA</scope>
</reference>
<dbReference type="EMBL" id="Z38002">
    <property type="protein sequence ID" value="CAA86109.1"/>
    <property type="molecule type" value="Genomic_DNA"/>
</dbReference>
<dbReference type="EMBL" id="AL009126">
    <property type="protein sequence ID" value="CAB15708.1"/>
    <property type="molecule type" value="Genomic_DNA"/>
</dbReference>
<dbReference type="PIR" id="I40482">
    <property type="entry name" value="I40482"/>
</dbReference>
<dbReference type="RefSeq" id="NP_391572.1">
    <property type="nucleotide sequence ID" value="NC_000964.3"/>
</dbReference>
<dbReference type="RefSeq" id="WP_003227667.1">
    <property type="nucleotide sequence ID" value="NZ_OZ025638.1"/>
</dbReference>
<dbReference type="SMR" id="P39157"/>
<dbReference type="FunCoup" id="P39157">
    <property type="interactions" value="9"/>
</dbReference>
<dbReference type="STRING" id="224308.BSU36910"/>
<dbReference type="PaxDb" id="224308-BSU36910"/>
<dbReference type="EnsemblBacteria" id="CAB15708">
    <property type="protein sequence ID" value="CAB15708"/>
    <property type="gene ID" value="BSU_36910"/>
</dbReference>
<dbReference type="GeneID" id="937007"/>
<dbReference type="KEGG" id="bsu:BSU36910"/>
<dbReference type="PATRIC" id="fig|224308.179.peg.3998"/>
<dbReference type="eggNOG" id="COG4475">
    <property type="taxonomic scope" value="Bacteria"/>
</dbReference>
<dbReference type="InParanoid" id="P39157"/>
<dbReference type="OrthoDB" id="9803187at2"/>
<dbReference type="PhylomeDB" id="P39157"/>
<dbReference type="BioCyc" id="BSUB:BSU36910-MONOMER"/>
<dbReference type="Proteomes" id="UP000001570">
    <property type="component" value="Chromosome"/>
</dbReference>
<dbReference type="Gene3D" id="3.40.50.10360">
    <property type="entry name" value="Hypothetical protein TT1679"/>
    <property type="match status" value="1"/>
</dbReference>
<dbReference type="HAMAP" id="MF_00800">
    <property type="entry name" value="UPF0340"/>
    <property type="match status" value="1"/>
</dbReference>
<dbReference type="InterPro" id="IPR028345">
    <property type="entry name" value="Antibiotic_NAT-like"/>
</dbReference>
<dbReference type="InterPro" id="IPR006340">
    <property type="entry name" value="DUF436"/>
</dbReference>
<dbReference type="NCBIfam" id="TIGR01440">
    <property type="entry name" value="TIGR01440 family protein"/>
    <property type="match status" value="1"/>
</dbReference>
<dbReference type="Pfam" id="PF04260">
    <property type="entry name" value="DUF436"/>
    <property type="match status" value="1"/>
</dbReference>
<dbReference type="PIRSF" id="PIRSF007510">
    <property type="entry name" value="UCP007510"/>
    <property type="match status" value="1"/>
</dbReference>
<dbReference type="SUPFAM" id="SSF110710">
    <property type="entry name" value="TTHA0583/YokD-like"/>
    <property type="match status" value="1"/>
</dbReference>
<comment type="induction">
    <text>Negatively regulated by TnrA under nitrogen-limited conditions.</text>
</comment>
<comment type="similarity">
    <text evidence="1">Belongs to the UPF0340 family.</text>
</comment>
<keyword id="KW-1185">Reference proteome</keyword>